<gene>
    <name evidence="1" type="primary">mdtC</name>
    <name type="ordered locus">EC55989_2332</name>
</gene>
<reference key="1">
    <citation type="journal article" date="2009" name="PLoS Genet.">
        <title>Organised genome dynamics in the Escherichia coli species results in highly diverse adaptive paths.</title>
        <authorList>
            <person name="Touchon M."/>
            <person name="Hoede C."/>
            <person name="Tenaillon O."/>
            <person name="Barbe V."/>
            <person name="Baeriswyl S."/>
            <person name="Bidet P."/>
            <person name="Bingen E."/>
            <person name="Bonacorsi S."/>
            <person name="Bouchier C."/>
            <person name="Bouvet O."/>
            <person name="Calteau A."/>
            <person name="Chiapello H."/>
            <person name="Clermont O."/>
            <person name="Cruveiller S."/>
            <person name="Danchin A."/>
            <person name="Diard M."/>
            <person name="Dossat C."/>
            <person name="Karoui M.E."/>
            <person name="Frapy E."/>
            <person name="Garry L."/>
            <person name="Ghigo J.M."/>
            <person name="Gilles A.M."/>
            <person name="Johnson J."/>
            <person name="Le Bouguenec C."/>
            <person name="Lescat M."/>
            <person name="Mangenot S."/>
            <person name="Martinez-Jehanne V."/>
            <person name="Matic I."/>
            <person name="Nassif X."/>
            <person name="Oztas S."/>
            <person name="Petit M.A."/>
            <person name="Pichon C."/>
            <person name="Rouy Z."/>
            <person name="Ruf C.S."/>
            <person name="Schneider D."/>
            <person name="Tourret J."/>
            <person name="Vacherie B."/>
            <person name="Vallenet D."/>
            <person name="Medigue C."/>
            <person name="Rocha E.P.C."/>
            <person name="Denamur E."/>
        </authorList>
    </citation>
    <scope>NUCLEOTIDE SEQUENCE [LARGE SCALE GENOMIC DNA]</scope>
    <source>
        <strain>55989 / EAEC</strain>
    </source>
</reference>
<sequence>MKFFALFIYRPVATILLSVAITLCGILGFRMLPVAPLPQVDFPVIMVSASLPGASPETMASSVATPLERSLGRIAGVSEMTSSSSLGSTRIILQFDFDRDINGAARDVQAAINAAQSLLPSGMPSRPTYRKANPSDAPIMILTLTSDTYSQGELYDFASTQLAPTISQIDGVGDVDVGGSSLPAVRVGLNPQALFNQGVSLDDVRTAISNANVRKPQGALEDGTHRWQIQTNDELKTAAEYQPLIIHYNNGGAVRLGDVATVTDSVQDVRNAGMTNAKPAILLMIRKLPEANIIQTVDSIRAKLPELQETIPAAIDLQIAQDRSPTIRASLEEVEQTLIISVALVILVVFLFLRSGRATIIPAVAVPVSLIGTFAAMYLCGFSLNNLSLMALTIATGFVVDDAIVVLENIARHLEAGMKPLQAALQGTREVGFTVLSMSLSLVAVFLPLLLMGGLPGRLLREFAVTLSVAIGISLLVSLTLTPMMCGWMLKASKPREQKRLRGFGRMLVALQQGYGKSLKWVLNHTRLVGVVLLGTIALNIWLYISIPKTFFPEQDTGVLMGGIQADQSISFQAMRGKLQDFMKIIRDDPAVDNVTGFTGGSRVNSGMMFITLKPRGERSETAQQIIDRLRVKLAKEPGANLFLMAVQDIRVGGRQSNASYQYTLLSDDLAALREWEPKIRKKLATLPELADVNSDQQDNGAEMNLVYDRDTMARLGIDVQAANSLLNNAFGQRQISTIYQPMNQYKVVMEVDPRYTQDISALEKMFVINNEGKAIPLSYFAKWQPANAPLSVNHQGLSAASTISFNLPTGKSLSDASAAIDRAMTQLGVPSTVRGSFAGTAQVFQETMNSQVILIIAAIATVYIVLGILYESYVHPLTILSTLPSAGVGALLALELFNAPFSLIALIGIMLLIGIVKKNAIMMVDFALEAQRHGNLTPQEAIFQACLLRFRPIMMTTLAALFGALPLVLSGGDGSELRQPLGITIVGGLVMSQLLTLYTTPVVYLFFDRLRLRFSRKPKQTVTE</sequence>
<accession>B7L9U9</accession>
<name>MDTC_ECO55</name>
<comment type="function">
    <text evidence="1">The MdtABC tripartite complex confers resistance against novobiocin and deoxycholate.</text>
</comment>
<comment type="subunit">
    <text evidence="1">Part of a tripartite efflux system composed of MdtA, MdtB and MdtC. MdtC forms a heteromultimer with MdtB.</text>
</comment>
<comment type="subcellular location">
    <subcellularLocation>
        <location evidence="1">Cell inner membrane</location>
        <topology evidence="1">Multi-pass membrane protein</topology>
    </subcellularLocation>
</comment>
<comment type="induction">
    <text>The mdtABC operon is transcriptionally activated by BaeR.</text>
</comment>
<comment type="similarity">
    <text evidence="1">Belongs to the resistance-nodulation-cell division (RND) (TC 2.A.6) family. MdtC subfamily.</text>
</comment>
<keyword id="KW-0997">Cell inner membrane</keyword>
<keyword id="KW-1003">Cell membrane</keyword>
<keyword id="KW-0472">Membrane</keyword>
<keyword id="KW-1185">Reference proteome</keyword>
<keyword id="KW-0812">Transmembrane</keyword>
<keyword id="KW-1133">Transmembrane helix</keyword>
<keyword id="KW-0813">Transport</keyword>
<proteinExistence type="evidence at transcript level"/>
<feature type="chain" id="PRO_1000184869" description="Multidrug resistance protein MdtC">
    <location>
        <begin position="1"/>
        <end position="1025"/>
    </location>
</feature>
<feature type="transmembrane region" description="Helical" evidence="1">
    <location>
        <begin position="3"/>
        <end position="23"/>
    </location>
</feature>
<feature type="transmembrane region" description="Helical" evidence="1">
    <location>
        <begin position="333"/>
        <end position="353"/>
    </location>
</feature>
<feature type="transmembrane region" description="Helical" evidence="1">
    <location>
        <begin position="360"/>
        <end position="380"/>
    </location>
</feature>
<feature type="transmembrane region" description="Helical" evidence="1">
    <location>
        <begin position="387"/>
        <end position="407"/>
    </location>
</feature>
<feature type="transmembrane region" description="Helical" evidence="1">
    <location>
        <begin position="431"/>
        <end position="451"/>
    </location>
</feature>
<feature type="transmembrane region" description="Helical" evidence="1">
    <location>
        <begin position="463"/>
        <end position="483"/>
    </location>
</feature>
<feature type="transmembrane region" description="Helical" evidence="1">
    <location>
        <begin position="528"/>
        <end position="548"/>
    </location>
</feature>
<feature type="transmembrane region" description="Helical" evidence="1">
    <location>
        <begin position="853"/>
        <end position="873"/>
    </location>
</feature>
<feature type="transmembrane region" description="Helical" evidence="1">
    <location>
        <begin position="875"/>
        <end position="895"/>
    </location>
</feature>
<feature type="transmembrane region" description="Helical" evidence="1">
    <location>
        <begin position="897"/>
        <end position="917"/>
    </location>
</feature>
<feature type="transmembrane region" description="Helical" evidence="1">
    <location>
        <begin position="953"/>
        <end position="973"/>
    </location>
</feature>
<feature type="transmembrane region" description="Helical" evidence="1">
    <location>
        <begin position="984"/>
        <end position="1004"/>
    </location>
</feature>
<evidence type="ECO:0000255" key="1">
    <source>
        <dbReference type="HAMAP-Rule" id="MF_01424"/>
    </source>
</evidence>
<protein>
    <recommendedName>
        <fullName evidence="1">Multidrug resistance protein MdtC</fullName>
    </recommendedName>
    <alternativeName>
        <fullName evidence="1">Multidrug transporter MdtC</fullName>
    </alternativeName>
</protein>
<dbReference type="EMBL" id="CU928145">
    <property type="protein sequence ID" value="CAU98204.1"/>
    <property type="molecule type" value="Genomic_DNA"/>
</dbReference>
<dbReference type="RefSeq" id="WP_000667537.1">
    <property type="nucleotide sequence ID" value="NC_011748.1"/>
</dbReference>
<dbReference type="SMR" id="B7L9U9"/>
<dbReference type="KEGG" id="eck:EC55989_2332"/>
<dbReference type="HOGENOM" id="CLU_002755_1_2_6"/>
<dbReference type="Proteomes" id="UP000000746">
    <property type="component" value="Chromosome"/>
</dbReference>
<dbReference type="GO" id="GO:0005886">
    <property type="term" value="C:plasma membrane"/>
    <property type="evidence" value="ECO:0007669"/>
    <property type="project" value="UniProtKB-SubCell"/>
</dbReference>
<dbReference type="GO" id="GO:0042910">
    <property type="term" value="F:xenobiotic transmembrane transporter activity"/>
    <property type="evidence" value="ECO:0007669"/>
    <property type="project" value="TreeGrafter"/>
</dbReference>
<dbReference type="FunFam" id="1.20.1640.10:FF:000001">
    <property type="entry name" value="Efflux pump membrane transporter"/>
    <property type="match status" value="1"/>
</dbReference>
<dbReference type="FunFam" id="3.30.70.1430:FF:000001">
    <property type="entry name" value="Efflux pump membrane transporter"/>
    <property type="match status" value="1"/>
</dbReference>
<dbReference type="FunFam" id="3.30.2090.10:FF:000004">
    <property type="entry name" value="Multidrug resistance protein MdtC"/>
    <property type="match status" value="1"/>
</dbReference>
<dbReference type="FunFam" id="3.30.2090.10:FF:000005">
    <property type="entry name" value="Multidrug resistance protein MdtC"/>
    <property type="match status" value="1"/>
</dbReference>
<dbReference type="FunFam" id="3.30.70.1430:FF:000004">
    <property type="entry name" value="Multidrug resistance protein MdtC"/>
    <property type="match status" value="1"/>
</dbReference>
<dbReference type="Gene3D" id="3.30.70.1430">
    <property type="entry name" value="Multidrug efflux transporter AcrB pore domain"/>
    <property type="match status" value="2"/>
</dbReference>
<dbReference type="Gene3D" id="3.30.70.1440">
    <property type="entry name" value="Multidrug efflux transporter AcrB pore domain"/>
    <property type="match status" value="1"/>
</dbReference>
<dbReference type="Gene3D" id="3.30.70.1320">
    <property type="entry name" value="Multidrug efflux transporter AcrB pore domain like"/>
    <property type="match status" value="1"/>
</dbReference>
<dbReference type="Gene3D" id="3.30.2090.10">
    <property type="entry name" value="Multidrug efflux transporter AcrB TolC docking domain, DN and DC subdomains"/>
    <property type="match status" value="2"/>
</dbReference>
<dbReference type="Gene3D" id="1.20.1640.10">
    <property type="entry name" value="Multidrug efflux transporter AcrB transmembrane domain"/>
    <property type="match status" value="2"/>
</dbReference>
<dbReference type="HAMAP" id="MF_01424">
    <property type="entry name" value="MdtC"/>
    <property type="match status" value="1"/>
</dbReference>
<dbReference type="InterPro" id="IPR027463">
    <property type="entry name" value="AcrB_DN_DC_subdom"/>
</dbReference>
<dbReference type="InterPro" id="IPR001036">
    <property type="entry name" value="Acrflvin-R"/>
</dbReference>
<dbReference type="InterPro" id="IPR023931">
    <property type="entry name" value="Multidrug-R_MdtC"/>
</dbReference>
<dbReference type="NCBIfam" id="NF007905">
    <property type="entry name" value="PRK10614.1"/>
    <property type="match status" value="1"/>
</dbReference>
<dbReference type="NCBIfam" id="NF033617">
    <property type="entry name" value="RND_permease_2"/>
    <property type="match status" value="1"/>
</dbReference>
<dbReference type="PANTHER" id="PTHR32063">
    <property type="match status" value="1"/>
</dbReference>
<dbReference type="PANTHER" id="PTHR32063:SF34">
    <property type="entry name" value="MULTIDRUG RESISTANCE PROTEIN MDTC"/>
    <property type="match status" value="1"/>
</dbReference>
<dbReference type="Pfam" id="PF00873">
    <property type="entry name" value="ACR_tran"/>
    <property type="match status" value="1"/>
</dbReference>
<dbReference type="PRINTS" id="PR00702">
    <property type="entry name" value="ACRIFLAVINRP"/>
</dbReference>
<dbReference type="SUPFAM" id="SSF82693">
    <property type="entry name" value="Multidrug efflux transporter AcrB pore domain, PN1, PN2, PC1 and PC2 subdomains"/>
    <property type="match status" value="4"/>
</dbReference>
<dbReference type="SUPFAM" id="SSF82714">
    <property type="entry name" value="Multidrug efflux transporter AcrB TolC docking domain, DN and DC subdomains"/>
    <property type="match status" value="2"/>
</dbReference>
<dbReference type="SUPFAM" id="SSF82866">
    <property type="entry name" value="Multidrug efflux transporter AcrB transmembrane domain"/>
    <property type="match status" value="2"/>
</dbReference>
<organism>
    <name type="scientific">Escherichia coli (strain 55989 / EAEC)</name>
    <dbReference type="NCBI Taxonomy" id="585055"/>
    <lineage>
        <taxon>Bacteria</taxon>
        <taxon>Pseudomonadati</taxon>
        <taxon>Pseudomonadota</taxon>
        <taxon>Gammaproteobacteria</taxon>
        <taxon>Enterobacterales</taxon>
        <taxon>Enterobacteriaceae</taxon>
        <taxon>Escherichia</taxon>
    </lineage>
</organism>